<name>NODL_RHILV</name>
<evidence type="ECO:0000305" key="1"/>
<organism>
    <name type="scientific">Rhizobium leguminosarum bv. viciae</name>
    <dbReference type="NCBI Taxonomy" id="387"/>
    <lineage>
        <taxon>Bacteria</taxon>
        <taxon>Pseudomonadati</taxon>
        <taxon>Pseudomonadota</taxon>
        <taxon>Alphaproteobacteria</taxon>
        <taxon>Hyphomicrobiales</taxon>
        <taxon>Rhizobiaceae</taxon>
        <taxon>Rhizobium/Agrobacterium group</taxon>
        <taxon>Rhizobium</taxon>
    </lineage>
</organism>
<sequence length="190" mass="20105">MTRSQKEKMLAGEMYNAADPEIQAELLLTGAWLKRYNDTLGDSAERWNGLLLERLGAVGLGAVIRPPFHCDYGFNIRIGAWVYINYNCVILDVAAVTIGDGTAIGPAVQIYTADHPHDPEQRQAGLQLGRPVSIGRHAWIGGGAIILPGVTIGDHAVIGAGSVVTRDVPAGSTAMGNPARVKAGGRLPKS</sequence>
<reference key="1">
    <citation type="journal article" date="1988" name="Mol. Microbiol.">
        <title>Characterization of the Rhizobium leguminosarum genes nodLMN involved in efficient host-specific nodulation.</title>
        <authorList>
            <person name="Surin B.P."/>
            <person name="Downie J.A."/>
        </authorList>
    </citation>
    <scope>NUCLEOTIDE SEQUENCE [GENOMIC DNA]</scope>
    <source>
        <strain>248</strain>
    </source>
</reference>
<reference key="2">
    <citation type="journal article" date="1989" name="Plant Mol. Biol.">
        <title>Additional nodulation genes on the Sym plasmid of Rhizobium leguminosarum biovar viciae.</title>
        <authorList>
            <person name="Canter Cremers H.C.J."/>
            <person name="Spaink H.P."/>
            <person name="Wijfjes A.H.M."/>
            <person name="Pees E."/>
            <person name="Wijffelman C.A."/>
            <person name="Okker R.J.H."/>
            <person name="Lugtenberg B.J.J."/>
        </authorList>
    </citation>
    <scope>NUCLEOTIDE SEQUENCE [GENOMIC DNA]</scope>
</reference>
<reference key="3">
    <citation type="journal article" date="1989" name="Mol. Microbiol.">
        <title>The nodL gene from Rhizobium leguminosarum is homologous to the acetyl transferases encoded by lacA and cysE.</title>
        <authorList>
            <person name="Downie J.A."/>
        </authorList>
    </citation>
    <scope>SIMILARITY TO OTHER MEMBER OF THE CYSE/LACA/NODL FAMILY</scope>
</reference>
<protein>
    <recommendedName>
        <fullName>Nodulation protein L</fullName>
        <ecNumber>2.3.1.-</ecNumber>
    </recommendedName>
</protein>
<dbReference type="EC" id="2.3.1.-"/>
<dbReference type="EMBL" id="X17557">
    <property type="protein sequence ID" value="CAA35590.1"/>
    <property type="molecule type" value="Genomic_DNA"/>
</dbReference>
<dbReference type="EMBL" id="Y00548">
    <property type="protein sequence ID" value="CAA68625.1"/>
    <property type="molecule type" value="Genomic_DNA"/>
</dbReference>
<dbReference type="PIR" id="S07000">
    <property type="entry name" value="S07000"/>
</dbReference>
<dbReference type="RefSeq" id="WP_003551796.1">
    <property type="nucleotide sequence ID" value="NZ_WIFC01000030.1"/>
</dbReference>
<dbReference type="SMR" id="P08632"/>
<dbReference type="OMA" id="CVILDCN"/>
<dbReference type="GO" id="GO:0005829">
    <property type="term" value="C:cytosol"/>
    <property type="evidence" value="ECO:0007669"/>
    <property type="project" value="TreeGrafter"/>
</dbReference>
<dbReference type="GO" id="GO:0016407">
    <property type="term" value="F:acetyltransferase activity"/>
    <property type="evidence" value="ECO:0007669"/>
    <property type="project" value="InterPro"/>
</dbReference>
<dbReference type="GO" id="GO:0008374">
    <property type="term" value="F:O-acyltransferase activity"/>
    <property type="evidence" value="ECO:0007669"/>
    <property type="project" value="TreeGrafter"/>
</dbReference>
<dbReference type="CDD" id="cd03357">
    <property type="entry name" value="LbH_MAT_GAT"/>
    <property type="match status" value="1"/>
</dbReference>
<dbReference type="FunFam" id="2.160.10.10:FF:000025">
    <property type="entry name" value="Hexapeptide-repeat containing-acetyltransferase"/>
    <property type="match status" value="1"/>
</dbReference>
<dbReference type="Gene3D" id="2.160.10.10">
    <property type="entry name" value="Hexapeptide repeat proteins"/>
    <property type="match status" value="1"/>
</dbReference>
<dbReference type="InterPro" id="IPR001451">
    <property type="entry name" value="Hexapep"/>
</dbReference>
<dbReference type="InterPro" id="IPR018357">
    <property type="entry name" value="Hexapep_transf_CS"/>
</dbReference>
<dbReference type="InterPro" id="IPR051159">
    <property type="entry name" value="Hexapeptide_acetyltransf"/>
</dbReference>
<dbReference type="InterPro" id="IPR024688">
    <property type="entry name" value="Mac_dom"/>
</dbReference>
<dbReference type="InterPro" id="IPR011004">
    <property type="entry name" value="Trimer_LpxA-like_sf"/>
</dbReference>
<dbReference type="PANTHER" id="PTHR23416:SF23">
    <property type="entry name" value="ACETYLTRANSFERASE C18B11.09C-RELATED"/>
    <property type="match status" value="1"/>
</dbReference>
<dbReference type="PANTHER" id="PTHR23416">
    <property type="entry name" value="SIALIC ACID SYNTHASE-RELATED"/>
    <property type="match status" value="1"/>
</dbReference>
<dbReference type="Pfam" id="PF00132">
    <property type="entry name" value="Hexapep"/>
    <property type="match status" value="1"/>
</dbReference>
<dbReference type="Pfam" id="PF12464">
    <property type="entry name" value="Mac"/>
    <property type="match status" value="1"/>
</dbReference>
<dbReference type="SMART" id="SM01266">
    <property type="entry name" value="Mac"/>
    <property type="match status" value="1"/>
</dbReference>
<dbReference type="SUPFAM" id="SSF51161">
    <property type="entry name" value="Trimeric LpxA-like enzymes"/>
    <property type="match status" value="1"/>
</dbReference>
<dbReference type="PROSITE" id="PS00101">
    <property type="entry name" value="HEXAPEP_TRANSFERASES"/>
    <property type="match status" value="1"/>
</dbReference>
<accession>P08632</accession>
<comment type="function">
    <text>Acetyltransferase implicated in the O-acetylation of Nod factors.</text>
</comment>
<comment type="similarity">
    <text evidence="1">Belongs to the transferase hexapeptide repeat family.</text>
</comment>
<keyword id="KW-0012">Acyltransferase</keyword>
<keyword id="KW-0536">Nodulation</keyword>
<keyword id="KW-0614">Plasmid</keyword>
<keyword id="KW-0677">Repeat</keyword>
<keyword id="KW-0808">Transferase</keyword>
<proteinExistence type="inferred from homology"/>
<feature type="chain" id="PRO_0000068694" description="Nodulation protein L">
    <location>
        <begin position="1"/>
        <end position="190"/>
    </location>
</feature>
<geneLocation type="plasmid">
    <name>sym pRL1JI</name>
</geneLocation>
<gene>
    <name type="primary">nodL</name>
</gene>